<protein>
    <recommendedName>
        <fullName evidence="1">Integration host factor subunit beta</fullName>
        <shortName evidence="1">IHF-beta</shortName>
    </recommendedName>
</protein>
<accession>B2SLH4</accession>
<gene>
    <name evidence="1" type="primary">ihfB</name>
    <name evidence="1" type="synonym">himD</name>
    <name type="ordered locus">PXO_00892</name>
</gene>
<name>IHFB_XANOP</name>
<sequence length="103" mass="11451">MTKSELIEILARRQAHLKSDDVDLAVKSLLEMMGQALSDGDRIEIRGFGSFSLHYRPPRLGRNPKTGESVALPGKHVPHFKPGKELRERVSSVVPVDMSDTTD</sequence>
<keyword id="KW-0233">DNA recombination</keyword>
<keyword id="KW-0238">DNA-binding</keyword>
<keyword id="KW-0804">Transcription</keyword>
<keyword id="KW-0805">Transcription regulation</keyword>
<keyword id="KW-0810">Translation regulation</keyword>
<proteinExistence type="inferred from homology"/>
<comment type="function">
    <text evidence="1">This protein is one of the two subunits of integration host factor, a specific DNA-binding protein that functions in genetic recombination as well as in transcriptional and translational control.</text>
</comment>
<comment type="subunit">
    <text evidence="1">Heterodimer of an alpha and a beta chain.</text>
</comment>
<comment type="similarity">
    <text evidence="1">Belongs to the bacterial histone-like protein family.</text>
</comment>
<organism>
    <name type="scientific">Xanthomonas oryzae pv. oryzae (strain PXO99A)</name>
    <dbReference type="NCBI Taxonomy" id="360094"/>
    <lineage>
        <taxon>Bacteria</taxon>
        <taxon>Pseudomonadati</taxon>
        <taxon>Pseudomonadota</taxon>
        <taxon>Gammaproteobacteria</taxon>
        <taxon>Lysobacterales</taxon>
        <taxon>Lysobacteraceae</taxon>
        <taxon>Xanthomonas</taxon>
    </lineage>
</organism>
<reference key="1">
    <citation type="journal article" date="2008" name="BMC Genomics">
        <title>Genome sequence and rapid evolution of the rice pathogen Xanthomonas oryzae pv. oryzae PXO99A.</title>
        <authorList>
            <person name="Salzberg S.L."/>
            <person name="Sommer D.D."/>
            <person name="Schatz M.C."/>
            <person name="Phillippy A.M."/>
            <person name="Rabinowicz P.D."/>
            <person name="Tsuge S."/>
            <person name="Furutani A."/>
            <person name="Ochiai H."/>
            <person name="Delcher A.L."/>
            <person name="Kelley D."/>
            <person name="Madupu R."/>
            <person name="Puiu D."/>
            <person name="Radune D."/>
            <person name="Shumway M."/>
            <person name="Trapnell C."/>
            <person name="Aparna G."/>
            <person name="Jha G."/>
            <person name="Pandey A."/>
            <person name="Patil P.B."/>
            <person name="Ishihara H."/>
            <person name="Meyer D.F."/>
            <person name="Szurek B."/>
            <person name="Verdier V."/>
            <person name="Koebnik R."/>
            <person name="Dow J.M."/>
            <person name="Ryan R.P."/>
            <person name="Hirata H."/>
            <person name="Tsuyumu S."/>
            <person name="Won Lee S."/>
            <person name="Seo Y.-S."/>
            <person name="Sriariyanum M."/>
            <person name="Ronald P.C."/>
            <person name="Sonti R.V."/>
            <person name="Van Sluys M.-A."/>
            <person name="Leach J.E."/>
            <person name="White F.F."/>
            <person name="Bogdanove A.J."/>
        </authorList>
    </citation>
    <scope>NUCLEOTIDE SEQUENCE [LARGE SCALE GENOMIC DNA]</scope>
    <source>
        <strain>PXO99A</strain>
    </source>
</reference>
<evidence type="ECO:0000255" key="1">
    <source>
        <dbReference type="HAMAP-Rule" id="MF_00381"/>
    </source>
</evidence>
<evidence type="ECO:0000256" key="2">
    <source>
        <dbReference type="SAM" id="MobiDB-lite"/>
    </source>
</evidence>
<dbReference type="EMBL" id="CP000967">
    <property type="protein sequence ID" value="ACD59036.1"/>
    <property type="molecule type" value="Genomic_DNA"/>
</dbReference>
<dbReference type="RefSeq" id="WP_011408447.1">
    <property type="nucleotide sequence ID" value="NC_010717.2"/>
</dbReference>
<dbReference type="SMR" id="B2SLH4"/>
<dbReference type="KEGG" id="xop:PXO_00892"/>
<dbReference type="eggNOG" id="COG0776">
    <property type="taxonomic scope" value="Bacteria"/>
</dbReference>
<dbReference type="HOGENOM" id="CLU_105066_2_0_6"/>
<dbReference type="Proteomes" id="UP000001740">
    <property type="component" value="Chromosome"/>
</dbReference>
<dbReference type="GO" id="GO:0005694">
    <property type="term" value="C:chromosome"/>
    <property type="evidence" value="ECO:0007669"/>
    <property type="project" value="InterPro"/>
</dbReference>
<dbReference type="GO" id="GO:0005829">
    <property type="term" value="C:cytosol"/>
    <property type="evidence" value="ECO:0007669"/>
    <property type="project" value="TreeGrafter"/>
</dbReference>
<dbReference type="GO" id="GO:0003677">
    <property type="term" value="F:DNA binding"/>
    <property type="evidence" value="ECO:0007669"/>
    <property type="project" value="UniProtKB-UniRule"/>
</dbReference>
<dbReference type="GO" id="GO:0030527">
    <property type="term" value="F:structural constituent of chromatin"/>
    <property type="evidence" value="ECO:0007669"/>
    <property type="project" value="InterPro"/>
</dbReference>
<dbReference type="GO" id="GO:0006310">
    <property type="term" value="P:DNA recombination"/>
    <property type="evidence" value="ECO:0007669"/>
    <property type="project" value="UniProtKB-UniRule"/>
</dbReference>
<dbReference type="GO" id="GO:0006355">
    <property type="term" value="P:regulation of DNA-templated transcription"/>
    <property type="evidence" value="ECO:0007669"/>
    <property type="project" value="UniProtKB-UniRule"/>
</dbReference>
<dbReference type="GO" id="GO:0006417">
    <property type="term" value="P:regulation of translation"/>
    <property type="evidence" value="ECO:0007669"/>
    <property type="project" value="UniProtKB-UniRule"/>
</dbReference>
<dbReference type="CDD" id="cd13836">
    <property type="entry name" value="IHF_B"/>
    <property type="match status" value="1"/>
</dbReference>
<dbReference type="FunFam" id="4.10.520.10:FF:000003">
    <property type="entry name" value="Integration host factor subunit beta"/>
    <property type="match status" value="1"/>
</dbReference>
<dbReference type="Gene3D" id="4.10.520.10">
    <property type="entry name" value="IHF-like DNA-binding proteins"/>
    <property type="match status" value="1"/>
</dbReference>
<dbReference type="HAMAP" id="MF_00381">
    <property type="entry name" value="IHF_beta"/>
    <property type="match status" value="1"/>
</dbReference>
<dbReference type="InterPro" id="IPR000119">
    <property type="entry name" value="Hist_DNA-bd"/>
</dbReference>
<dbReference type="InterPro" id="IPR020816">
    <property type="entry name" value="Histone-like_DNA-bd_CS"/>
</dbReference>
<dbReference type="InterPro" id="IPR010992">
    <property type="entry name" value="IHF-like_DNA-bd_dom_sf"/>
</dbReference>
<dbReference type="InterPro" id="IPR005685">
    <property type="entry name" value="IHF_beta"/>
</dbReference>
<dbReference type="NCBIfam" id="TIGR00988">
    <property type="entry name" value="hip"/>
    <property type="match status" value="1"/>
</dbReference>
<dbReference type="NCBIfam" id="NF001222">
    <property type="entry name" value="PRK00199.1"/>
    <property type="match status" value="1"/>
</dbReference>
<dbReference type="PANTHER" id="PTHR33175">
    <property type="entry name" value="DNA-BINDING PROTEIN HU"/>
    <property type="match status" value="1"/>
</dbReference>
<dbReference type="PANTHER" id="PTHR33175:SF5">
    <property type="entry name" value="INTEGRATION HOST FACTOR SUBUNIT BETA"/>
    <property type="match status" value="1"/>
</dbReference>
<dbReference type="Pfam" id="PF00216">
    <property type="entry name" value="Bac_DNA_binding"/>
    <property type="match status" value="1"/>
</dbReference>
<dbReference type="PRINTS" id="PR01727">
    <property type="entry name" value="DNABINDINGHU"/>
</dbReference>
<dbReference type="SMART" id="SM00411">
    <property type="entry name" value="BHL"/>
    <property type="match status" value="1"/>
</dbReference>
<dbReference type="SUPFAM" id="SSF47729">
    <property type="entry name" value="IHF-like DNA-binding proteins"/>
    <property type="match status" value="1"/>
</dbReference>
<dbReference type="PROSITE" id="PS00045">
    <property type="entry name" value="HISTONE_LIKE"/>
    <property type="match status" value="1"/>
</dbReference>
<feature type="chain" id="PRO_1000122249" description="Integration host factor subunit beta">
    <location>
        <begin position="1"/>
        <end position="103"/>
    </location>
</feature>
<feature type="region of interest" description="Disordered" evidence="2">
    <location>
        <begin position="59"/>
        <end position="82"/>
    </location>
</feature>